<gene>
    <name evidence="1" type="primary">MDM34</name>
    <name type="ordered locus">KLLA0A01573g</name>
</gene>
<keyword id="KW-0445">Lipid transport</keyword>
<keyword id="KW-0446">Lipid-binding</keyword>
<keyword id="KW-0472">Membrane</keyword>
<keyword id="KW-0496">Mitochondrion</keyword>
<keyword id="KW-1000">Mitochondrion outer membrane</keyword>
<keyword id="KW-1185">Reference proteome</keyword>
<keyword id="KW-0812">Transmembrane</keyword>
<keyword id="KW-1134">Transmembrane beta strand</keyword>
<keyword id="KW-0813">Transport</keyword>
<accession>Q6CYC1</accession>
<name>MDM34_KLULA</name>
<evidence type="ECO:0000255" key="1">
    <source>
        <dbReference type="HAMAP-Rule" id="MF_03105"/>
    </source>
</evidence>
<evidence type="ECO:0000256" key="2">
    <source>
        <dbReference type="SAM" id="MobiDB-lite"/>
    </source>
</evidence>
<organism>
    <name type="scientific">Kluyveromyces lactis (strain ATCC 8585 / CBS 2359 / DSM 70799 / NBRC 1267 / NRRL Y-1140 / WM37)</name>
    <name type="common">Yeast</name>
    <name type="synonym">Candida sphaerica</name>
    <dbReference type="NCBI Taxonomy" id="284590"/>
    <lineage>
        <taxon>Eukaryota</taxon>
        <taxon>Fungi</taxon>
        <taxon>Dikarya</taxon>
        <taxon>Ascomycota</taxon>
        <taxon>Saccharomycotina</taxon>
        <taxon>Saccharomycetes</taxon>
        <taxon>Saccharomycetales</taxon>
        <taxon>Saccharomycetaceae</taxon>
        <taxon>Kluyveromyces</taxon>
    </lineage>
</organism>
<feature type="chain" id="PRO_0000384343" description="Mitochondrial distribution and morphology protein 34">
    <location>
        <begin position="1"/>
        <end position="540"/>
    </location>
</feature>
<feature type="domain" description="SMP-LTD" evidence="1">
    <location>
        <begin position="1"/>
        <end position="208"/>
    </location>
</feature>
<feature type="region of interest" description="Disordered" evidence="2">
    <location>
        <begin position="26"/>
        <end position="51"/>
    </location>
</feature>
<feature type="region of interest" description="Disordered" evidence="2">
    <location>
        <begin position="379"/>
        <end position="399"/>
    </location>
</feature>
<feature type="compositionally biased region" description="Polar residues" evidence="2">
    <location>
        <begin position="35"/>
        <end position="44"/>
    </location>
</feature>
<dbReference type="EMBL" id="CR382121">
    <property type="protein sequence ID" value="CAH02656.1"/>
    <property type="molecule type" value="Genomic_DNA"/>
</dbReference>
<dbReference type="RefSeq" id="XP_451068.1">
    <property type="nucleotide sequence ID" value="XM_451068.1"/>
</dbReference>
<dbReference type="FunCoup" id="Q6CYC1">
    <property type="interactions" value="74"/>
</dbReference>
<dbReference type="STRING" id="284590.Q6CYC1"/>
<dbReference type="PaxDb" id="284590-Q6CYC1"/>
<dbReference type="KEGG" id="kla:KLLA0_A01573g"/>
<dbReference type="eggNOG" id="ENOG502QT3W">
    <property type="taxonomic scope" value="Eukaryota"/>
</dbReference>
<dbReference type="HOGENOM" id="CLU_036329_0_0_1"/>
<dbReference type="InParanoid" id="Q6CYC1"/>
<dbReference type="OMA" id="PGCLERQ"/>
<dbReference type="Proteomes" id="UP000000598">
    <property type="component" value="Chromosome A"/>
</dbReference>
<dbReference type="GO" id="GO:0032865">
    <property type="term" value="C:ERMES complex"/>
    <property type="evidence" value="ECO:0007669"/>
    <property type="project" value="UniProtKB-UniRule"/>
</dbReference>
<dbReference type="GO" id="GO:0008289">
    <property type="term" value="F:lipid binding"/>
    <property type="evidence" value="ECO:0007669"/>
    <property type="project" value="UniProtKB-KW"/>
</dbReference>
<dbReference type="GO" id="GO:0000002">
    <property type="term" value="P:mitochondrial genome maintenance"/>
    <property type="evidence" value="ECO:0007669"/>
    <property type="project" value="UniProtKB-UniRule"/>
</dbReference>
<dbReference type="GO" id="GO:1990456">
    <property type="term" value="P:mitochondrion-endoplasmic reticulum membrane tethering"/>
    <property type="evidence" value="ECO:0007669"/>
    <property type="project" value="TreeGrafter"/>
</dbReference>
<dbReference type="GO" id="GO:0015914">
    <property type="term" value="P:phospholipid transport"/>
    <property type="evidence" value="ECO:0007669"/>
    <property type="project" value="TreeGrafter"/>
</dbReference>
<dbReference type="HAMAP" id="MF_03105">
    <property type="entry name" value="Mdm34"/>
    <property type="match status" value="1"/>
</dbReference>
<dbReference type="InterPro" id="IPR027536">
    <property type="entry name" value="Mdm34"/>
</dbReference>
<dbReference type="InterPro" id="IPR031468">
    <property type="entry name" value="SMP_LBD"/>
</dbReference>
<dbReference type="PANTHER" id="PTHR28185">
    <property type="entry name" value="MITOCHONDRIAL DISTRIBUTION AND MORPHOLOGY PROTEIN 34"/>
    <property type="match status" value="1"/>
</dbReference>
<dbReference type="PANTHER" id="PTHR28185:SF1">
    <property type="entry name" value="MITOCHONDRIAL DISTRIBUTION AND MORPHOLOGY PROTEIN 34"/>
    <property type="match status" value="1"/>
</dbReference>
<dbReference type="PROSITE" id="PS51847">
    <property type="entry name" value="SMP"/>
    <property type="match status" value="1"/>
</dbReference>
<sequence>MSFKFNSGTFEDNTFNEQIRDRLTRALNPSRFENPESTSGQDGSDSQKKPKKLDILKSGVTVRQVDFRTIPQLEILDLDVSAQSKSLLKGICKISCKDAMIQITTEIEANLLLLYEAVSPEFTTPKLISNDSFTVPITMTFDHIELEAITNIFVKNTGVGISFNDVNLDFRFECSMKLLQTSIEKRLKNSMETIFKDVLPSVIFNMSQRWFTHGPELVEDPSLIATDSALSEVTPMTILDDSDLQDLSPATMLRLSTLISSRQSLALNPISSHTVATIPGCIERQNLRRFSSRIPSLNNYYAQEVGKHRPSKILPTRENSNSIIANKMASDFIQNSLPTEVLESGSYNIREIANIQQRIYERNNEENVIRRRRIRLGKRSKSVQDTAAKMHPVPESGSLHPIIQPSTTPAATVTPLLSPQPVVAKSPPESMTPNTLPEQSPYTSNIAIDKIPDLTLPQAQLQKDKVPMRLNLLEESYFKSDLKDLRNSLYSPMRNQRFYVQSEDGARPSLLDGKRFSFVGLANQQMKWGNDDLPPPYKAN</sequence>
<reference key="1">
    <citation type="journal article" date="2004" name="Nature">
        <title>Genome evolution in yeasts.</title>
        <authorList>
            <person name="Dujon B."/>
            <person name="Sherman D."/>
            <person name="Fischer G."/>
            <person name="Durrens P."/>
            <person name="Casaregola S."/>
            <person name="Lafontaine I."/>
            <person name="de Montigny J."/>
            <person name="Marck C."/>
            <person name="Neuveglise C."/>
            <person name="Talla E."/>
            <person name="Goffard N."/>
            <person name="Frangeul L."/>
            <person name="Aigle M."/>
            <person name="Anthouard V."/>
            <person name="Babour A."/>
            <person name="Barbe V."/>
            <person name="Barnay S."/>
            <person name="Blanchin S."/>
            <person name="Beckerich J.-M."/>
            <person name="Beyne E."/>
            <person name="Bleykasten C."/>
            <person name="Boisrame A."/>
            <person name="Boyer J."/>
            <person name="Cattolico L."/>
            <person name="Confanioleri F."/>
            <person name="de Daruvar A."/>
            <person name="Despons L."/>
            <person name="Fabre E."/>
            <person name="Fairhead C."/>
            <person name="Ferry-Dumazet H."/>
            <person name="Groppi A."/>
            <person name="Hantraye F."/>
            <person name="Hennequin C."/>
            <person name="Jauniaux N."/>
            <person name="Joyet P."/>
            <person name="Kachouri R."/>
            <person name="Kerrest A."/>
            <person name="Koszul R."/>
            <person name="Lemaire M."/>
            <person name="Lesur I."/>
            <person name="Ma L."/>
            <person name="Muller H."/>
            <person name="Nicaud J.-M."/>
            <person name="Nikolski M."/>
            <person name="Oztas S."/>
            <person name="Ozier-Kalogeropoulos O."/>
            <person name="Pellenz S."/>
            <person name="Potier S."/>
            <person name="Richard G.-F."/>
            <person name="Straub M.-L."/>
            <person name="Suleau A."/>
            <person name="Swennen D."/>
            <person name="Tekaia F."/>
            <person name="Wesolowski-Louvel M."/>
            <person name="Westhof E."/>
            <person name="Wirth B."/>
            <person name="Zeniou-Meyer M."/>
            <person name="Zivanovic Y."/>
            <person name="Bolotin-Fukuhara M."/>
            <person name="Thierry A."/>
            <person name="Bouchier C."/>
            <person name="Caudron B."/>
            <person name="Scarpelli C."/>
            <person name="Gaillardin C."/>
            <person name="Weissenbach J."/>
            <person name="Wincker P."/>
            <person name="Souciet J.-L."/>
        </authorList>
    </citation>
    <scope>NUCLEOTIDE SEQUENCE [LARGE SCALE GENOMIC DNA]</scope>
    <source>
        <strain>ATCC 8585 / CBS 2359 / DSM 70799 / NBRC 1267 / NRRL Y-1140 / WM37</strain>
    </source>
</reference>
<protein>
    <recommendedName>
        <fullName evidence="1">Mitochondrial distribution and morphology protein 34</fullName>
    </recommendedName>
</protein>
<comment type="function">
    <text evidence="1">Component of the ERMES/MDM complex, which serves as a molecular tether to connect the endoplasmic reticulum (ER) and mitochondria. Components of this complex are involved in the control of mitochondrial shape and protein biogenesis, and function in nonvesicular lipid trafficking between the ER and mitochondria. MDM34 is required for the interaction of the ER-resident membrane protein MMM1 and the outer mitochondrial membrane-resident beta-barrel protein MDM10.</text>
</comment>
<comment type="subunit">
    <text evidence="1">Component of the ER-mitochondria encounter structure (ERMES) or MDM complex, composed of MMM1, MDM10, MDM12 and MDM34.</text>
</comment>
<comment type="subcellular location">
    <subcellularLocation>
        <location evidence="1">Mitochondrion outer membrane</location>
        <topology evidence="1">Multi-pass membrane protein</topology>
    </subcellularLocation>
    <text evidence="1">The ERMES/MDM complex localizes to a few discrete foci (around 10 per single cell), that represent mitochondria-endoplasmic reticulum junctions. These foci are often found next to mtDNA nucleoids.</text>
</comment>
<comment type="domain">
    <text evidence="1">Lacks alpha-helical transmembrane segments, suggesting that it resides in the membrane via beta-sheet conformations similar to those predicted for other outer membrane proteins and porin.</text>
</comment>
<comment type="domain">
    <text evidence="1">The SMP-LTD domain is a barrel-like domain that can bind various types of glycerophospholipids in its interior and mediate their transfer between two adjacent bilayers.</text>
</comment>
<comment type="similarity">
    <text evidence="1">Belongs to the MDM34 family.</text>
</comment>
<proteinExistence type="inferred from homology"/>